<comment type="function">
    <text evidence="1">NDH-1 shuttles electrons from NADH, via FMN and iron-sulfur (Fe-S) centers, to quinones in the respiratory chain. The immediate electron acceptor for the enzyme in this species is believed to be ubiquinone. Couples the redox reaction to proton translocation (for every two electrons transferred, four hydrogen ions are translocated across the cytoplasmic membrane), and thus conserves the redox energy in a proton gradient.</text>
</comment>
<comment type="catalytic activity">
    <reaction evidence="1">
        <text>a quinone + NADH + 5 H(+)(in) = a quinol + NAD(+) + 4 H(+)(out)</text>
        <dbReference type="Rhea" id="RHEA:57888"/>
        <dbReference type="ChEBI" id="CHEBI:15378"/>
        <dbReference type="ChEBI" id="CHEBI:24646"/>
        <dbReference type="ChEBI" id="CHEBI:57540"/>
        <dbReference type="ChEBI" id="CHEBI:57945"/>
        <dbReference type="ChEBI" id="CHEBI:132124"/>
    </reaction>
</comment>
<comment type="subunit">
    <text evidence="1">NDH-1 is composed of 14 different subunits. Subunits NuoA, H, J, K, L, M, N constitute the membrane sector of the complex.</text>
</comment>
<comment type="subcellular location">
    <subcellularLocation>
        <location evidence="1">Cell inner membrane</location>
        <topology evidence="1">Multi-pass membrane protein</topology>
    </subcellularLocation>
</comment>
<comment type="similarity">
    <text evidence="1">Belongs to the complex I subunit 4L family.</text>
</comment>
<proteinExistence type="inferred from homology"/>
<sequence>MSSLSLAHYLVLGAVLFAISIVGIFLNRKNVIVLLMAIELMLLAVNLNFVAFSHYLGDLAGQVFVFFILTVAAAESAIGLAILVVLFRNLDTINVDDLDSLKG</sequence>
<gene>
    <name evidence="1" type="primary">nuoK</name>
    <name type="ordered locus">Rpic12D_1881</name>
</gene>
<dbReference type="EC" id="7.1.1.-" evidence="1"/>
<dbReference type="EMBL" id="CP001644">
    <property type="protein sequence ID" value="ACS63162.1"/>
    <property type="molecule type" value="Genomic_DNA"/>
</dbReference>
<dbReference type="SMR" id="C6BJN9"/>
<dbReference type="STRING" id="428406.Rpic12D_1881"/>
<dbReference type="KEGG" id="rpf:Rpic12D_1881"/>
<dbReference type="HOGENOM" id="CLU_144724_2_0_4"/>
<dbReference type="GO" id="GO:0030964">
    <property type="term" value="C:NADH dehydrogenase complex"/>
    <property type="evidence" value="ECO:0007669"/>
    <property type="project" value="TreeGrafter"/>
</dbReference>
<dbReference type="GO" id="GO:0005886">
    <property type="term" value="C:plasma membrane"/>
    <property type="evidence" value="ECO:0007669"/>
    <property type="project" value="UniProtKB-SubCell"/>
</dbReference>
<dbReference type="GO" id="GO:0050136">
    <property type="term" value="F:NADH:ubiquinone reductase (non-electrogenic) activity"/>
    <property type="evidence" value="ECO:0007669"/>
    <property type="project" value="UniProtKB-UniRule"/>
</dbReference>
<dbReference type="GO" id="GO:0048038">
    <property type="term" value="F:quinone binding"/>
    <property type="evidence" value="ECO:0007669"/>
    <property type="project" value="UniProtKB-KW"/>
</dbReference>
<dbReference type="GO" id="GO:0042773">
    <property type="term" value="P:ATP synthesis coupled electron transport"/>
    <property type="evidence" value="ECO:0007669"/>
    <property type="project" value="InterPro"/>
</dbReference>
<dbReference type="FunFam" id="1.10.287.3510:FF:000001">
    <property type="entry name" value="NADH-quinone oxidoreductase subunit K"/>
    <property type="match status" value="1"/>
</dbReference>
<dbReference type="Gene3D" id="1.10.287.3510">
    <property type="match status" value="1"/>
</dbReference>
<dbReference type="HAMAP" id="MF_01456">
    <property type="entry name" value="NDH1_NuoK"/>
    <property type="match status" value="1"/>
</dbReference>
<dbReference type="InterPro" id="IPR001133">
    <property type="entry name" value="NADH_UbQ_OxRdtase_chain4L/K"/>
</dbReference>
<dbReference type="InterPro" id="IPR039428">
    <property type="entry name" value="NUOK/Mnh_C1-like"/>
</dbReference>
<dbReference type="NCBIfam" id="NF004320">
    <property type="entry name" value="PRK05715.1-2"/>
    <property type="match status" value="1"/>
</dbReference>
<dbReference type="NCBIfam" id="NF004321">
    <property type="entry name" value="PRK05715.1-3"/>
    <property type="match status" value="1"/>
</dbReference>
<dbReference type="NCBIfam" id="NF004323">
    <property type="entry name" value="PRK05715.1-5"/>
    <property type="match status" value="1"/>
</dbReference>
<dbReference type="PANTHER" id="PTHR11434:SF21">
    <property type="entry name" value="NADH DEHYDROGENASE SUBUNIT 4L-RELATED"/>
    <property type="match status" value="1"/>
</dbReference>
<dbReference type="PANTHER" id="PTHR11434">
    <property type="entry name" value="NADH-UBIQUINONE OXIDOREDUCTASE SUBUNIT ND4L"/>
    <property type="match status" value="1"/>
</dbReference>
<dbReference type="Pfam" id="PF00420">
    <property type="entry name" value="Oxidored_q2"/>
    <property type="match status" value="1"/>
</dbReference>
<evidence type="ECO:0000255" key="1">
    <source>
        <dbReference type="HAMAP-Rule" id="MF_01456"/>
    </source>
</evidence>
<accession>C6BJN9</accession>
<protein>
    <recommendedName>
        <fullName evidence="1">NADH-quinone oxidoreductase subunit K</fullName>
        <ecNumber evidence="1">7.1.1.-</ecNumber>
    </recommendedName>
    <alternativeName>
        <fullName evidence="1">NADH dehydrogenase I subunit K</fullName>
    </alternativeName>
    <alternativeName>
        <fullName evidence="1">NDH-1 subunit K</fullName>
    </alternativeName>
</protein>
<feature type="chain" id="PRO_0000390184" description="NADH-quinone oxidoreductase subunit K">
    <location>
        <begin position="1"/>
        <end position="103"/>
    </location>
</feature>
<feature type="transmembrane region" description="Helical" evidence="1">
    <location>
        <begin position="6"/>
        <end position="26"/>
    </location>
</feature>
<feature type="transmembrane region" description="Helical" evidence="1">
    <location>
        <begin position="32"/>
        <end position="52"/>
    </location>
</feature>
<feature type="transmembrane region" description="Helical" evidence="1">
    <location>
        <begin position="63"/>
        <end position="83"/>
    </location>
</feature>
<reference key="1">
    <citation type="submission" date="2009-06" db="EMBL/GenBank/DDBJ databases">
        <title>Complete sequence chromosome 1 of Ralstonia pickettii 12D.</title>
        <authorList>
            <consortium name="US DOE Joint Genome Institute"/>
            <person name="Lucas S."/>
            <person name="Copeland A."/>
            <person name="Lapidus A."/>
            <person name="Glavina del Rio T."/>
            <person name="Dalin E."/>
            <person name="Tice H."/>
            <person name="Bruce D."/>
            <person name="Goodwin L."/>
            <person name="Pitluck S."/>
            <person name="Sims D."/>
            <person name="Meincke L."/>
            <person name="Brettin T."/>
            <person name="Detter J.C."/>
            <person name="Han C."/>
            <person name="Larimer F."/>
            <person name="Land M."/>
            <person name="Hauser L."/>
            <person name="Kyrpides N."/>
            <person name="Ovchinnikova G."/>
            <person name="Marsh T."/>
            <person name="Richardson P."/>
        </authorList>
    </citation>
    <scope>NUCLEOTIDE SEQUENCE [LARGE SCALE GENOMIC DNA]</scope>
    <source>
        <strain>12D</strain>
    </source>
</reference>
<organism>
    <name type="scientific">Ralstonia pickettii (strain 12D)</name>
    <dbReference type="NCBI Taxonomy" id="428406"/>
    <lineage>
        <taxon>Bacteria</taxon>
        <taxon>Pseudomonadati</taxon>
        <taxon>Pseudomonadota</taxon>
        <taxon>Betaproteobacteria</taxon>
        <taxon>Burkholderiales</taxon>
        <taxon>Burkholderiaceae</taxon>
        <taxon>Ralstonia</taxon>
    </lineage>
</organism>
<keyword id="KW-0997">Cell inner membrane</keyword>
<keyword id="KW-1003">Cell membrane</keyword>
<keyword id="KW-0472">Membrane</keyword>
<keyword id="KW-0520">NAD</keyword>
<keyword id="KW-0874">Quinone</keyword>
<keyword id="KW-1278">Translocase</keyword>
<keyword id="KW-0812">Transmembrane</keyword>
<keyword id="KW-1133">Transmembrane helix</keyword>
<keyword id="KW-0813">Transport</keyword>
<keyword id="KW-0830">Ubiquinone</keyword>
<name>NUOK_RALP1</name>